<reference key="1">
    <citation type="journal article" date="2009" name="PLoS Genet.">
        <title>Organised genome dynamics in the Escherichia coli species results in highly diverse adaptive paths.</title>
        <authorList>
            <person name="Touchon M."/>
            <person name="Hoede C."/>
            <person name="Tenaillon O."/>
            <person name="Barbe V."/>
            <person name="Baeriswyl S."/>
            <person name="Bidet P."/>
            <person name="Bingen E."/>
            <person name="Bonacorsi S."/>
            <person name="Bouchier C."/>
            <person name="Bouvet O."/>
            <person name="Calteau A."/>
            <person name="Chiapello H."/>
            <person name="Clermont O."/>
            <person name="Cruveiller S."/>
            <person name="Danchin A."/>
            <person name="Diard M."/>
            <person name="Dossat C."/>
            <person name="Karoui M.E."/>
            <person name="Frapy E."/>
            <person name="Garry L."/>
            <person name="Ghigo J.M."/>
            <person name="Gilles A.M."/>
            <person name="Johnson J."/>
            <person name="Le Bouguenec C."/>
            <person name="Lescat M."/>
            <person name="Mangenot S."/>
            <person name="Martinez-Jehanne V."/>
            <person name="Matic I."/>
            <person name="Nassif X."/>
            <person name="Oztas S."/>
            <person name="Petit M.A."/>
            <person name="Pichon C."/>
            <person name="Rouy Z."/>
            <person name="Ruf C.S."/>
            <person name="Schneider D."/>
            <person name="Tourret J."/>
            <person name="Vacherie B."/>
            <person name="Vallenet D."/>
            <person name="Medigue C."/>
            <person name="Rocha E.P.C."/>
            <person name="Denamur E."/>
        </authorList>
    </citation>
    <scope>NUCLEOTIDE SEQUENCE [LARGE SCALE GENOMIC DNA]</scope>
    <source>
        <strain>S88 / ExPEC</strain>
    </source>
</reference>
<gene>
    <name evidence="1" type="primary">uxuA</name>
    <name type="ordered locus">ECS88_4940</name>
</gene>
<accession>B7MML2</accession>
<proteinExistence type="inferred from homology"/>
<organism>
    <name type="scientific">Escherichia coli O45:K1 (strain S88 / ExPEC)</name>
    <dbReference type="NCBI Taxonomy" id="585035"/>
    <lineage>
        <taxon>Bacteria</taxon>
        <taxon>Pseudomonadati</taxon>
        <taxon>Pseudomonadota</taxon>
        <taxon>Gammaproteobacteria</taxon>
        <taxon>Enterobacterales</taxon>
        <taxon>Enterobacteriaceae</taxon>
        <taxon>Escherichia</taxon>
    </lineage>
</organism>
<feature type="chain" id="PRO_1000197928" description="Mannonate dehydratase">
    <location>
        <begin position="1"/>
        <end position="394"/>
    </location>
</feature>
<evidence type="ECO:0000255" key="1">
    <source>
        <dbReference type="HAMAP-Rule" id="MF_00106"/>
    </source>
</evidence>
<keyword id="KW-0408">Iron</keyword>
<keyword id="KW-0456">Lyase</keyword>
<keyword id="KW-0464">Manganese</keyword>
<keyword id="KW-1185">Reference proteome</keyword>
<comment type="function">
    <text evidence="1">Catalyzes the dehydration of D-mannonate.</text>
</comment>
<comment type="catalytic activity">
    <reaction evidence="1">
        <text>D-mannonate = 2-dehydro-3-deoxy-D-gluconate + H2O</text>
        <dbReference type="Rhea" id="RHEA:20097"/>
        <dbReference type="ChEBI" id="CHEBI:15377"/>
        <dbReference type="ChEBI" id="CHEBI:17767"/>
        <dbReference type="ChEBI" id="CHEBI:57990"/>
        <dbReference type="EC" id="4.2.1.8"/>
    </reaction>
</comment>
<comment type="cofactor">
    <cofactor evidence="1">
        <name>Fe(2+)</name>
        <dbReference type="ChEBI" id="CHEBI:29033"/>
    </cofactor>
    <cofactor evidence="1">
        <name>Mn(2+)</name>
        <dbReference type="ChEBI" id="CHEBI:29035"/>
    </cofactor>
</comment>
<comment type="pathway">
    <text evidence="1">Carbohydrate metabolism; pentose and glucuronate interconversion.</text>
</comment>
<comment type="similarity">
    <text evidence="1">Belongs to the mannonate dehydratase family.</text>
</comment>
<name>UXUA_ECO45</name>
<sequence>MEQTWRWYGPNDPVSLADVRQAGATGVVTALHHIPNGEVWSVEEILKRKAIVEDAGLVWSVVESVPIHEDIKTHTGNYEQWIANYQQTLRNLAQCGIRTVCYNFMPVLDWTRTDLEYVLPDGSKALRFDQIEFAAFEMHILKRPGAEADYTEEEIAQAAERFATMSDEDKARLTRNIIAGLPGAEEGYTLDQFRKHLELYKDIDKAKLRENFAVFLKAIIPVAEEVGVRMAVHPDDPPRPILGLPRIVSTIEDMQWMVDTVNSMANGFTMCTGSYGVRADNDLVDMIKQFGPRIYFTHLRSTMREDNPKTFHEAAHLNGDVDMYEVVKAIVEEEHRRKAEGKEDLIPMRPDHGHQMLDDLKKKTNPGYSAIGRLKGLAEVRGVELAIQRAFFSR</sequence>
<protein>
    <recommendedName>
        <fullName evidence="1">Mannonate dehydratase</fullName>
        <ecNumber evidence="1">4.2.1.8</ecNumber>
    </recommendedName>
    <alternativeName>
        <fullName evidence="1">D-mannonate hydro-lyase</fullName>
    </alternativeName>
</protein>
<dbReference type="EC" id="4.2.1.8" evidence="1"/>
<dbReference type="EMBL" id="CU928161">
    <property type="protein sequence ID" value="CAR06084.1"/>
    <property type="molecule type" value="Genomic_DNA"/>
</dbReference>
<dbReference type="RefSeq" id="WP_000438582.1">
    <property type="nucleotide sequence ID" value="NC_011742.1"/>
</dbReference>
<dbReference type="SMR" id="B7MML2"/>
<dbReference type="GeneID" id="93777517"/>
<dbReference type="KEGG" id="ecz:ECS88_4940"/>
<dbReference type="HOGENOM" id="CLU_058621_2_0_6"/>
<dbReference type="UniPathway" id="UPA00246"/>
<dbReference type="Proteomes" id="UP000000747">
    <property type="component" value="Chromosome"/>
</dbReference>
<dbReference type="GO" id="GO:0008198">
    <property type="term" value="F:ferrous iron binding"/>
    <property type="evidence" value="ECO:0007669"/>
    <property type="project" value="TreeGrafter"/>
</dbReference>
<dbReference type="GO" id="GO:0030145">
    <property type="term" value="F:manganese ion binding"/>
    <property type="evidence" value="ECO:0007669"/>
    <property type="project" value="TreeGrafter"/>
</dbReference>
<dbReference type="GO" id="GO:0008927">
    <property type="term" value="F:mannonate dehydratase activity"/>
    <property type="evidence" value="ECO:0007669"/>
    <property type="project" value="UniProtKB-UniRule"/>
</dbReference>
<dbReference type="GO" id="GO:0042840">
    <property type="term" value="P:D-glucuronate catabolic process"/>
    <property type="evidence" value="ECO:0007669"/>
    <property type="project" value="TreeGrafter"/>
</dbReference>
<dbReference type="FunFam" id="3.20.20.150:FF:000004">
    <property type="entry name" value="Mannonate dehydratase"/>
    <property type="match status" value="1"/>
</dbReference>
<dbReference type="FunFam" id="3.20.20.150:FF:000005">
    <property type="entry name" value="Mannonate dehydratase"/>
    <property type="match status" value="1"/>
</dbReference>
<dbReference type="Gene3D" id="3.20.20.150">
    <property type="entry name" value="Divalent-metal-dependent TIM barrel enzymes"/>
    <property type="match status" value="2"/>
</dbReference>
<dbReference type="HAMAP" id="MF_00106">
    <property type="entry name" value="UxuA"/>
    <property type="match status" value="1"/>
</dbReference>
<dbReference type="InterPro" id="IPR004628">
    <property type="entry name" value="Man_deHydtase"/>
</dbReference>
<dbReference type="InterPro" id="IPR036237">
    <property type="entry name" value="Xyl_isomerase-like_sf"/>
</dbReference>
<dbReference type="NCBIfam" id="NF003027">
    <property type="entry name" value="PRK03906.1"/>
    <property type="match status" value="1"/>
</dbReference>
<dbReference type="NCBIfam" id="TIGR00695">
    <property type="entry name" value="uxuA"/>
    <property type="match status" value="1"/>
</dbReference>
<dbReference type="PANTHER" id="PTHR30387">
    <property type="entry name" value="MANNONATE DEHYDRATASE"/>
    <property type="match status" value="1"/>
</dbReference>
<dbReference type="PANTHER" id="PTHR30387:SF2">
    <property type="entry name" value="MANNONATE DEHYDRATASE"/>
    <property type="match status" value="1"/>
</dbReference>
<dbReference type="Pfam" id="PF03786">
    <property type="entry name" value="UxuA"/>
    <property type="match status" value="1"/>
</dbReference>
<dbReference type="PIRSF" id="PIRSF016049">
    <property type="entry name" value="Man_dehyd"/>
    <property type="match status" value="1"/>
</dbReference>
<dbReference type="SUPFAM" id="SSF51658">
    <property type="entry name" value="Xylose isomerase-like"/>
    <property type="match status" value="1"/>
</dbReference>